<evidence type="ECO:0000255" key="1">
    <source>
        <dbReference type="HAMAP-Rule" id="MF_00023"/>
    </source>
</evidence>
<comment type="function">
    <text evidence="1">Required for rescue of stalled ribosomes mediated by trans-translation. Binds to transfer-messenger RNA (tmRNA), required for stable association of tmRNA with ribosomes. tmRNA and SmpB together mimic tRNA shape, replacing the anticodon stem-loop with SmpB. tmRNA is encoded by the ssrA gene; the 2 termini fold to resemble tRNA(Ala) and it encodes a 'tag peptide', a short internal open reading frame. During trans-translation Ala-aminoacylated tmRNA acts like a tRNA, entering the A-site of stalled ribosomes, displacing the stalled mRNA. The ribosome then switches to translate the ORF on the tmRNA; the nascent peptide is terminated with the 'tag peptide' encoded by the tmRNA and targeted for degradation. The ribosome is freed to recommence translation, which seems to be the essential function of trans-translation.</text>
</comment>
<comment type="subcellular location">
    <subcellularLocation>
        <location evidence="1">Cytoplasm</location>
    </subcellularLocation>
    <text evidence="1">The tmRNA-SmpB complex associates with stalled 70S ribosomes.</text>
</comment>
<comment type="similarity">
    <text evidence="1">Belongs to the SmpB family.</text>
</comment>
<feature type="chain" id="PRO_1000090186" description="SsrA-binding protein">
    <location>
        <begin position="1"/>
        <end position="164"/>
    </location>
</feature>
<organism>
    <name type="scientific">Shewanella woodyi (strain ATCC 51908 / MS32)</name>
    <dbReference type="NCBI Taxonomy" id="392500"/>
    <lineage>
        <taxon>Bacteria</taxon>
        <taxon>Pseudomonadati</taxon>
        <taxon>Pseudomonadota</taxon>
        <taxon>Gammaproteobacteria</taxon>
        <taxon>Alteromonadales</taxon>
        <taxon>Shewanellaceae</taxon>
        <taxon>Shewanella</taxon>
    </lineage>
</organism>
<gene>
    <name evidence="1" type="primary">smpB</name>
    <name type="ordered locus">Swoo_1520</name>
</gene>
<dbReference type="EMBL" id="CP000961">
    <property type="protein sequence ID" value="ACA85808.1"/>
    <property type="molecule type" value="Genomic_DNA"/>
</dbReference>
<dbReference type="RefSeq" id="WP_012324154.1">
    <property type="nucleotide sequence ID" value="NC_010506.1"/>
</dbReference>
<dbReference type="SMR" id="B1KKG8"/>
<dbReference type="STRING" id="392500.Swoo_1520"/>
<dbReference type="KEGG" id="swd:Swoo_1520"/>
<dbReference type="eggNOG" id="COG0691">
    <property type="taxonomic scope" value="Bacteria"/>
</dbReference>
<dbReference type="HOGENOM" id="CLU_108953_3_0_6"/>
<dbReference type="Proteomes" id="UP000002168">
    <property type="component" value="Chromosome"/>
</dbReference>
<dbReference type="GO" id="GO:0005829">
    <property type="term" value="C:cytosol"/>
    <property type="evidence" value="ECO:0007669"/>
    <property type="project" value="TreeGrafter"/>
</dbReference>
<dbReference type="GO" id="GO:0003723">
    <property type="term" value="F:RNA binding"/>
    <property type="evidence" value="ECO:0007669"/>
    <property type="project" value="UniProtKB-UniRule"/>
</dbReference>
<dbReference type="GO" id="GO:0070929">
    <property type="term" value="P:trans-translation"/>
    <property type="evidence" value="ECO:0007669"/>
    <property type="project" value="UniProtKB-UniRule"/>
</dbReference>
<dbReference type="CDD" id="cd09294">
    <property type="entry name" value="SmpB"/>
    <property type="match status" value="1"/>
</dbReference>
<dbReference type="Gene3D" id="2.40.280.10">
    <property type="match status" value="1"/>
</dbReference>
<dbReference type="HAMAP" id="MF_00023">
    <property type="entry name" value="SmpB"/>
    <property type="match status" value="1"/>
</dbReference>
<dbReference type="InterPro" id="IPR023620">
    <property type="entry name" value="SmpB"/>
</dbReference>
<dbReference type="InterPro" id="IPR000037">
    <property type="entry name" value="SsrA-bd_prot"/>
</dbReference>
<dbReference type="InterPro" id="IPR020081">
    <property type="entry name" value="SsrA-bd_prot_CS"/>
</dbReference>
<dbReference type="NCBIfam" id="NF003843">
    <property type="entry name" value="PRK05422.1"/>
    <property type="match status" value="1"/>
</dbReference>
<dbReference type="NCBIfam" id="TIGR00086">
    <property type="entry name" value="smpB"/>
    <property type="match status" value="1"/>
</dbReference>
<dbReference type="PANTHER" id="PTHR30308:SF2">
    <property type="entry name" value="SSRA-BINDING PROTEIN"/>
    <property type="match status" value="1"/>
</dbReference>
<dbReference type="PANTHER" id="PTHR30308">
    <property type="entry name" value="TMRNA-BINDING COMPONENT OF TRANS-TRANSLATION TAGGING COMPLEX"/>
    <property type="match status" value="1"/>
</dbReference>
<dbReference type="Pfam" id="PF01668">
    <property type="entry name" value="SmpB"/>
    <property type="match status" value="1"/>
</dbReference>
<dbReference type="SUPFAM" id="SSF74982">
    <property type="entry name" value="Small protein B (SmpB)"/>
    <property type="match status" value="1"/>
</dbReference>
<dbReference type="PROSITE" id="PS01317">
    <property type="entry name" value="SSRP"/>
    <property type="match status" value="1"/>
</dbReference>
<sequence>MAKKNAKKSKNSSASIARNKRATFDYKFEEKMEAGLSLMGWEVKSIRMGKVNLSESYVFMREGEAFLFGCTIAPLNTASTHVVCDPMRSRKLLLKRKELDKLQGLVDRKGYSIVPISMYWQKGAWVKIEIGLGKGKKEHDKRDDTKDREWQIEKARTMKKAVQQ</sequence>
<reference key="1">
    <citation type="submission" date="2008-02" db="EMBL/GenBank/DDBJ databases">
        <title>Complete sequence of Shewanella woodyi ATCC 51908.</title>
        <authorList>
            <consortium name="US DOE Joint Genome Institute"/>
            <person name="Copeland A."/>
            <person name="Lucas S."/>
            <person name="Lapidus A."/>
            <person name="Glavina del Rio T."/>
            <person name="Dalin E."/>
            <person name="Tice H."/>
            <person name="Bruce D."/>
            <person name="Goodwin L."/>
            <person name="Pitluck S."/>
            <person name="Sims D."/>
            <person name="Brettin T."/>
            <person name="Detter J.C."/>
            <person name="Han C."/>
            <person name="Kuske C.R."/>
            <person name="Schmutz J."/>
            <person name="Larimer F."/>
            <person name="Land M."/>
            <person name="Hauser L."/>
            <person name="Kyrpides N."/>
            <person name="Lykidis A."/>
            <person name="Zhao J.-S."/>
            <person name="Richardson P."/>
        </authorList>
    </citation>
    <scope>NUCLEOTIDE SEQUENCE [LARGE SCALE GENOMIC DNA]</scope>
    <source>
        <strain>ATCC 51908 / MS32</strain>
    </source>
</reference>
<proteinExistence type="inferred from homology"/>
<name>SSRP_SHEWM</name>
<keyword id="KW-0963">Cytoplasm</keyword>
<keyword id="KW-1185">Reference proteome</keyword>
<keyword id="KW-0694">RNA-binding</keyword>
<protein>
    <recommendedName>
        <fullName evidence="1">SsrA-binding protein</fullName>
    </recommendedName>
    <alternativeName>
        <fullName evidence="1">Small protein B</fullName>
    </alternativeName>
</protein>
<accession>B1KKG8</accession>